<sequence length="291" mass="31900">MAGMKEIRGKIKSVQNTRKITKAMEMVAASKMRRAQERMRAARPYAEKVRAIAAHMSRANPEYRHPFMVANEGVKTAGMILVTTDKGLCGGLNTNVLRASLQKFKELEEKGQKVEATAIGGKGLGFLNRFGAKVISQVVHLGDTPHLDKLIGAVKTQLDLYSEGRLSAVYLAYTRFVNTMKQETVIEQLLPLSSEHFDANDGTPATSWDYIYEPDAQAVVDELLVRYVEALVYQAVAENMASEQSARMVAMKAASDNAKTVISELQLSYNKSRQAAITKELSEIVGGAAAV</sequence>
<feature type="chain" id="PRO_1000053176" description="ATP synthase gamma chain">
    <location>
        <begin position="1"/>
        <end position="291"/>
    </location>
</feature>
<proteinExistence type="inferred from homology"/>
<reference key="1">
    <citation type="journal article" date="2005" name="BMC Genomics">
        <title>Bacterial genome adaptation to niches: divergence of the potential virulence genes in three Burkholderia species of different survival strategies.</title>
        <authorList>
            <person name="Kim H.S."/>
            <person name="Schell M.A."/>
            <person name="Yu Y."/>
            <person name="Ulrich R.L."/>
            <person name="Sarria S.H."/>
            <person name="Nierman W.C."/>
            <person name="DeShazer D."/>
        </authorList>
    </citation>
    <scope>NUCLEOTIDE SEQUENCE [LARGE SCALE GENOMIC DNA]</scope>
    <source>
        <strain>ATCC 700388 / DSM 13276 / CCUG 48851 / CIP 106301 / E264</strain>
    </source>
</reference>
<organism>
    <name type="scientific">Burkholderia thailandensis (strain ATCC 700388 / DSM 13276 / CCUG 48851 / CIP 106301 / E264)</name>
    <dbReference type="NCBI Taxonomy" id="271848"/>
    <lineage>
        <taxon>Bacteria</taxon>
        <taxon>Pseudomonadati</taxon>
        <taxon>Pseudomonadota</taxon>
        <taxon>Betaproteobacteria</taxon>
        <taxon>Burkholderiales</taxon>
        <taxon>Burkholderiaceae</taxon>
        <taxon>Burkholderia</taxon>
        <taxon>pseudomallei group</taxon>
    </lineage>
</organism>
<protein>
    <recommendedName>
        <fullName evidence="1">ATP synthase gamma chain</fullName>
    </recommendedName>
    <alternativeName>
        <fullName evidence="1">ATP synthase F1 sector gamma subunit</fullName>
    </alternativeName>
    <alternativeName>
        <fullName evidence="1">F-ATPase gamma subunit</fullName>
    </alternativeName>
</protein>
<accession>Q2STE8</accession>
<dbReference type="EMBL" id="CP000086">
    <property type="protein sequence ID" value="ABC38893.1"/>
    <property type="molecule type" value="Genomic_DNA"/>
</dbReference>
<dbReference type="RefSeq" id="WP_009906701.1">
    <property type="nucleotide sequence ID" value="NZ_CP008785.1"/>
</dbReference>
<dbReference type="SMR" id="Q2STE8"/>
<dbReference type="GeneID" id="45122978"/>
<dbReference type="KEGG" id="bte:BTH_I3309"/>
<dbReference type="HOGENOM" id="CLU_050669_0_1_4"/>
<dbReference type="Proteomes" id="UP000001930">
    <property type="component" value="Chromosome I"/>
</dbReference>
<dbReference type="GO" id="GO:0005886">
    <property type="term" value="C:plasma membrane"/>
    <property type="evidence" value="ECO:0007669"/>
    <property type="project" value="UniProtKB-SubCell"/>
</dbReference>
<dbReference type="GO" id="GO:0045259">
    <property type="term" value="C:proton-transporting ATP synthase complex"/>
    <property type="evidence" value="ECO:0007669"/>
    <property type="project" value="UniProtKB-KW"/>
</dbReference>
<dbReference type="GO" id="GO:0005524">
    <property type="term" value="F:ATP binding"/>
    <property type="evidence" value="ECO:0007669"/>
    <property type="project" value="UniProtKB-UniRule"/>
</dbReference>
<dbReference type="GO" id="GO:0046933">
    <property type="term" value="F:proton-transporting ATP synthase activity, rotational mechanism"/>
    <property type="evidence" value="ECO:0007669"/>
    <property type="project" value="UniProtKB-UniRule"/>
</dbReference>
<dbReference type="GO" id="GO:0042777">
    <property type="term" value="P:proton motive force-driven plasma membrane ATP synthesis"/>
    <property type="evidence" value="ECO:0007669"/>
    <property type="project" value="UniProtKB-UniRule"/>
</dbReference>
<dbReference type="CDD" id="cd12151">
    <property type="entry name" value="F1-ATPase_gamma"/>
    <property type="match status" value="1"/>
</dbReference>
<dbReference type="FunFam" id="1.10.287.80:FF:000005">
    <property type="entry name" value="ATP synthase gamma chain"/>
    <property type="match status" value="1"/>
</dbReference>
<dbReference type="Gene3D" id="3.40.1380.10">
    <property type="match status" value="1"/>
</dbReference>
<dbReference type="Gene3D" id="1.10.287.80">
    <property type="entry name" value="ATP synthase, gamma subunit, helix hairpin domain"/>
    <property type="match status" value="1"/>
</dbReference>
<dbReference type="HAMAP" id="MF_00815">
    <property type="entry name" value="ATP_synth_gamma_bact"/>
    <property type="match status" value="1"/>
</dbReference>
<dbReference type="InterPro" id="IPR035968">
    <property type="entry name" value="ATP_synth_F1_ATPase_gsu"/>
</dbReference>
<dbReference type="InterPro" id="IPR000131">
    <property type="entry name" value="ATP_synth_F1_gsu"/>
</dbReference>
<dbReference type="InterPro" id="IPR023632">
    <property type="entry name" value="ATP_synth_F1_gsu_CS"/>
</dbReference>
<dbReference type="NCBIfam" id="TIGR01146">
    <property type="entry name" value="ATPsyn_F1gamma"/>
    <property type="match status" value="1"/>
</dbReference>
<dbReference type="NCBIfam" id="NF004144">
    <property type="entry name" value="PRK05621.1-1"/>
    <property type="match status" value="1"/>
</dbReference>
<dbReference type="PANTHER" id="PTHR11693">
    <property type="entry name" value="ATP SYNTHASE GAMMA CHAIN"/>
    <property type="match status" value="1"/>
</dbReference>
<dbReference type="PANTHER" id="PTHR11693:SF22">
    <property type="entry name" value="ATP SYNTHASE SUBUNIT GAMMA, MITOCHONDRIAL"/>
    <property type="match status" value="1"/>
</dbReference>
<dbReference type="Pfam" id="PF00231">
    <property type="entry name" value="ATP-synt"/>
    <property type="match status" value="1"/>
</dbReference>
<dbReference type="PRINTS" id="PR00126">
    <property type="entry name" value="ATPASEGAMMA"/>
</dbReference>
<dbReference type="SUPFAM" id="SSF52943">
    <property type="entry name" value="ATP synthase (F1-ATPase), gamma subunit"/>
    <property type="match status" value="1"/>
</dbReference>
<dbReference type="PROSITE" id="PS00153">
    <property type="entry name" value="ATPASE_GAMMA"/>
    <property type="match status" value="1"/>
</dbReference>
<gene>
    <name evidence="1" type="primary">atpG</name>
    <name type="ordered locus">BTH_I3309</name>
</gene>
<evidence type="ECO:0000255" key="1">
    <source>
        <dbReference type="HAMAP-Rule" id="MF_00815"/>
    </source>
</evidence>
<comment type="function">
    <text evidence="1">Produces ATP from ADP in the presence of a proton gradient across the membrane. The gamma chain is believed to be important in regulating ATPase activity and the flow of protons through the CF(0) complex.</text>
</comment>
<comment type="subunit">
    <text evidence="1">F-type ATPases have 2 components, CF(1) - the catalytic core - and CF(0) - the membrane proton channel. CF(1) has five subunits: alpha(3), beta(3), gamma(1), delta(1), epsilon(1). CF(0) has three main subunits: a, b and c.</text>
</comment>
<comment type="subcellular location">
    <subcellularLocation>
        <location evidence="1">Cell inner membrane</location>
        <topology evidence="1">Peripheral membrane protein</topology>
    </subcellularLocation>
</comment>
<comment type="similarity">
    <text evidence="1">Belongs to the ATPase gamma chain family.</text>
</comment>
<keyword id="KW-0066">ATP synthesis</keyword>
<keyword id="KW-0997">Cell inner membrane</keyword>
<keyword id="KW-1003">Cell membrane</keyword>
<keyword id="KW-0139">CF(1)</keyword>
<keyword id="KW-0375">Hydrogen ion transport</keyword>
<keyword id="KW-0406">Ion transport</keyword>
<keyword id="KW-0472">Membrane</keyword>
<keyword id="KW-0813">Transport</keyword>
<name>ATPG_BURTA</name>